<protein>
    <recommendedName>
        <fullName>Phosphocarrier protein HPr</fullName>
    </recommendedName>
    <alternativeName>
        <fullName>Histidine-containing protein</fullName>
    </alternativeName>
</protein>
<comment type="function">
    <text evidence="1">General (non sugar-specific) component of the phosphoenolpyruvate-dependent sugar phosphotransferase system (sugar PTS). This major carbohydrate active-transport system catalyzes the phosphorylation of incoming sugar substrates concomitantly with their translocation across the cell membrane. The phosphoryl group from phosphoenolpyruvate (PEP) is transferred to the phosphoryl carrier protein HPr by enzyme I. Phospho-HPr then transfers it to the PTS EIIA domain.</text>
</comment>
<comment type="activity regulation">
    <text evidence="1">Phosphorylation on Ser-46 inhibits the phosphoryl transfer from enzyme I to HPr.</text>
</comment>
<comment type="subcellular location">
    <subcellularLocation>
        <location evidence="1">Cytoplasm</location>
    </subcellularLocation>
</comment>
<comment type="similarity">
    <text evidence="3">Belongs to the HPr family.</text>
</comment>
<organism>
    <name type="scientific">Xylella fastidiosa (strain 9a5c)</name>
    <dbReference type="NCBI Taxonomy" id="160492"/>
    <lineage>
        <taxon>Bacteria</taxon>
        <taxon>Pseudomonadati</taxon>
        <taxon>Pseudomonadota</taxon>
        <taxon>Gammaproteobacteria</taxon>
        <taxon>Lysobacterales</taxon>
        <taxon>Lysobacteraceae</taxon>
        <taxon>Xylella</taxon>
    </lineage>
</organism>
<feature type="chain" id="PRO_0000107888" description="Phosphocarrier protein HPr">
    <location>
        <begin position="1"/>
        <end position="89"/>
    </location>
</feature>
<feature type="domain" description="HPr" evidence="2">
    <location>
        <begin position="1"/>
        <end position="88"/>
    </location>
</feature>
<feature type="active site" description="Pros-phosphohistidine intermediate" evidence="2">
    <location>
        <position position="15"/>
    </location>
</feature>
<feature type="modified residue" description="Phosphoserine; by HPrK/P" evidence="2">
    <location>
        <position position="46"/>
    </location>
</feature>
<sequence length="89" mass="9875">MLEHELIVTNKLGLHARATAKLVQTMSKFQSNTTLSTKGREVNAKSIMGVMLLAASQGTVIRVRIDGEDEHTAMQALSELFENRFNEDT</sequence>
<accession>Q9PDH6</accession>
<reference key="1">
    <citation type="journal article" date="2000" name="Nature">
        <title>The genome sequence of the plant pathogen Xylella fastidiosa.</title>
        <authorList>
            <person name="Simpson A.J.G."/>
            <person name="Reinach F.C."/>
            <person name="Arruda P."/>
            <person name="Abreu F.A."/>
            <person name="Acencio M."/>
            <person name="Alvarenga R."/>
            <person name="Alves L.M.C."/>
            <person name="Araya J.E."/>
            <person name="Baia G.S."/>
            <person name="Baptista C.S."/>
            <person name="Barros M.H."/>
            <person name="Bonaccorsi E.D."/>
            <person name="Bordin S."/>
            <person name="Bove J.M."/>
            <person name="Briones M.R.S."/>
            <person name="Bueno M.R.P."/>
            <person name="Camargo A.A."/>
            <person name="Camargo L.E.A."/>
            <person name="Carraro D.M."/>
            <person name="Carrer H."/>
            <person name="Colauto N.B."/>
            <person name="Colombo C."/>
            <person name="Costa F.F."/>
            <person name="Costa M.C.R."/>
            <person name="Costa-Neto C.M."/>
            <person name="Coutinho L.L."/>
            <person name="Cristofani M."/>
            <person name="Dias-Neto E."/>
            <person name="Docena C."/>
            <person name="El-Dorry H."/>
            <person name="Facincani A.P."/>
            <person name="Ferreira A.J.S."/>
            <person name="Ferreira V.C.A."/>
            <person name="Ferro J.A."/>
            <person name="Fraga J.S."/>
            <person name="Franca S.C."/>
            <person name="Franco M.C."/>
            <person name="Frohme M."/>
            <person name="Furlan L.R."/>
            <person name="Garnier M."/>
            <person name="Goldman G.H."/>
            <person name="Goldman M.H.S."/>
            <person name="Gomes S.L."/>
            <person name="Gruber A."/>
            <person name="Ho P.L."/>
            <person name="Hoheisel J.D."/>
            <person name="Junqueira M.L."/>
            <person name="Kemper E.L."/>
            <person name="Kitajima J.P."/>
            <person name="Krieger J.E."/>
            <person name="Kuramae E.E."/>
            <person name="Laigret F."/>
            <person name="Lambais M.R."/>
            <person name="Leite L.C.C."/>
            <person name="Lemos E.G.M."/>
            <person name="Lemos M.V.F."/>
            <person name="Lopes S.A."/>
            <person name="Lopes C.R."/>
            <person name="Machado J.A."/>
            <person name="Machado M.A."/>
            <person name="Madeira A.M.B.N."/>
            <person name="Madeira H.M.F."/>
            <person name="Marino C.L."/>
            <person name="Marques M.V."/>
            <person name="Martins E.A.L."/>
            <person name="Martins E.M.F."/>
            <person name="Matsukuma A.Y."/>
            <person name="Menck C.F.M."/>
            <person name="Miracca E.C."/>
            <person name="Miyaki C.Y."/>
            <person name="Monteiro-Vitorello C.B."/>
            <person name="Moon D.H."/>
            <person name="Nagai M.A."/>
            <person name="Nascimento A.L.T.O."/>
            <person name="Netto L.E.S."/>
            <person name="Nhani A. Jr."/>
            <person name="Nobrega F.G."/>
            <person name="Nunes L.R."/>
            <person name="Oliveira M.A."/>
            <person name="de Oliveira M.C."/>
            <person name="de Oliveira R.C."/>
            <person name="Palmieri D.A."/>
            <person name="Paris A."/>
            <person name="Peixoto B.R."/>
            <person name="Pereira G.A.G."/>
            <person name="Pereira H.A. Jr."/>
            <person name="Pesquero J.B."/>
            <person name="Quaggio R.B."/>
            <person name="Roberto P.G."/>
            <person name="Rodrigues V."/>
            <person name="de Rosa A.J.M."/>
            <person name="de Rosa V.E. Jr."/>
            <person name="de Sa R.G."/>
            <person name="Santelli R.V."/>
            <person name="Sawasaki H.E."/>
            <person name="da Silva A.C.R."/>
            <person name="da Silva A.M."/>
            <person name="da Silva F.R."/>
            <person name="Silva W.A. Jr."/>
            <person name="da Silveira J.F."/>
            <person name="Silvestri M.L.Z."/>
            <person name="Siqueira W.J."/>
            <person name="de Souza A.A."/>
            <person name="de Souza A.P."/>
            <person name="Terenzi M.F."/>
            <person name="Truffi D."/>
            <person name="Tsai S.M."/>
            <person name="Tsuhako M.H."/>
            <person name="Vallada H."/>
            <person name="Van Sluys M.A."/>
            <person name="Verjovski-Almeida S."/>
            <person name="Vettore A.L."/>
            <person name="Zago M.A."/>
            <person name="Zatz M."/>
            <person name="Meidanis J."/>
            <person name="Setubal J.C."/>
        </authorList>
    </citation>
    <scope>NUCLEOTIDE SEQUENCE [LARGE SCALE GENOMIC DNA]</scope>
    <source>
        <strain>9a5c</strain>
    </source>
</reference>
<proteinExistence type="inferred from homology"/>
<gene>
    <name type="primary">ptsH</name>
    <name type="ordered locus">XF_1403</name>
</gene>
<evidence type="ECO:0000250" key="1"/>
<evidence type="ECO:0000255" key="2">
    <source>
        <dbReference type="PROSITE-ProRule" id="PRU00681"/>
    </source>
</evidence>
<evidence type="ECO:0000305" key="3"/>
<name>PTHP_XYLFA</name>
<dbReference type="EMBL" id="AE003849">
    <property type="protein sequence ID" value="AAF84212.1"/>
    <property type="molecule type" value="Genomic_DNA"/>
</dbReference>
<dbReference type="PIR" id="G82686">
    <property type="entry name" value="G82686"/>
</dbReference>
<dbReference type="RefSeq" id="WP_023906746.1">
    <property type="nucleotide sequence ID" value="NC_002488.3"/>
</dbReference>
<dbReference type="SMR" id="Q9PDH6"/>
<dbReference type="STRING" id="160492.XF_1403"/>
<dbReference type="KEGG" id="xfa:XF_1403"/>
<dbReference type="eggNOG" id="COG1925">
    <property type="taxonomic scope" value="Bacteria"/>
</dbReference>
<dbReference type="HOGENOM" id="CLU_136230_1_1_6"/>
<dbReference type="Proteomes" id="UP000000812">
    <property type="component" value="Chromosome"/>
</dbReference>
<dbReference type="GO" id="GO:0005737">
    <property type="term" value="C:cytoplasm"/>
    <property type="evidence" value="ECO:0007669"/>
    <property type="project" value="UniProtKB-SubCell"/>
</dbReference>
<dbReference type="GO" id="GO:0009401">
    <property type="term" value="P:phosphoenolpyruvate-dependent sugar phosphotransferase system"/>
    <property type="evidence" value="ECO:0007669"/>
    <property type="project" value="UniProtKB-KW"/>
</dbReference>
<dbReference type="CDD" id="cd00367">
    <property type="entry name" value="PTS-HPr_like"/>
    <property type="match status" value="1"/>
</dbReference>
<dbReference type="Gene3D" id="3.30.1340.10">
    <property type="entry name" value="HPr-like"/>
    <property type="match status" value="1"/>
</dbReference>
<dbReference type="InterPro" id="IPR050399">
    <property type="entry name" value="HPr"/>
</dbReference>
<dbReference type="InterPro" id="IPR000032">
    <property type="entry name" value="HPr-like"/>
</dbReference>
<dbReference type="InterPro" id="IPR035895">
    <property type="entry name" value="HPr-like_sf"/>
</dbReference>
<dbReference type="InterPro" id="IPR001020">
    <property type="entry name" value="PTS_HPr_His_P_site"/>
</dbReference>
<dbReference type="InterPro" id="IPR002114">
    <property type="entry name" value="PTS_HPr_Ser_P_site"/>
</dbReference>
<dbReference type="NCBIfam" id="TIGR01003">
    <property type="entry name" value="PTS_HPr_family"/>
    <property type="match status" value="1"/>
</dbReference>
<dbReference type="PANTHER" id="PTHR33705">
    <property type="entry name" value="PHOSPHOCARRIER PROTEIN HPR"/>
    <property type="match status" value="1"/>
</dbReference>
<dbReference type="PANTHER" id="PTHR33705:SF2">
    <property type="entry name" value="PHOSPHOCARRIER PROTEIN NPR"/>
    <property type="match status" value="1"/>
</dbReference>
<dbReference type="Pfam" id="PF00381">
    <property type="entry name" value="PTS-HPr"/>
    <property type="match status" value="1"/>
</dbReference>
<dbReference type="PRINTS" id="PR00107">
    <property type="entry name" value="PHOSPHOCPHPR"/>
</dbReference>
<dbReference type="SUPFAM" id="SSF55594">
    <property type="entry name" value="HPr-like"/>
    <property type="match status" value="1"/>
</dbReference>
<dbReference type="PROSITE" id="PS51350">
    <property type="entry name" value="PTS_HPR_DOM"/>
    <property type="match status" value="1"/>
</dbReference>
<dbReference type="PROSITE" id="PS00369">
    <property type="entry name" value="PTS_HPR_HIS"/>
    <property type="match status" value="1"/>
</dbReference>
<dbReference type="PROSITE" id="PS00589">
    <property type="entry name" value="PTS_HPR_SER"/>
    <property type="match status" value="1"/>
</dbReference>
<keyword id="KW-0963">Cytoplasm</keyword>
<keyword id="KW-0597">Phosphoprotein</keyword>
<keyword id="KW-0598">Phosphotransferase system</keyword>
<keyword id="KW-0762">Sugar transport</keyword>
<keyword id="KW-0813">Transport</keyword>